<feature type="chain" id="PRO_1000009492" description="UPF0114 protein Sden_0436">
    <location>
        <begin position="1"/>
        <end position="162"/>
    </location>
</feature>
<feature type="transmembrane region" description="Helical" evidence="1">
    <location>
        <begin position="15"/>
        <end position="35"/>
    </location>
</feature>
<feature type="transmembrane region" description="Helical" evidence="1">
    <location>
        <begin position="53"/>
        <end position="73"/>
    </location>
</feature>
<feature type="transmembrane region" description="Helical" evidence="1">
    <location>
        <begin position="136"/>
        <end position="156"/>
    </location>
</feature>
<comment type="subcellular location">
    <subcellularLocation>
        <location evidence="1">Cell membrane</location>
        <topology evidence="1">Multi-pass membrane protein</topology>
    </subcellularLocation>
</comment>
<comment type="similarity">
    <text evidence="1">Belongs to the UPF0114 family.</text>
</comment>
<reference key="1">
    <citation type="submission" date="2006-03" db="EMBL/GenBank/DDBJ databases">
        <title>Complete sequence of Shewanella denitrificans OS217.</title>
        <authorList>
            <consortium name="US DOE Joint Genome Institute"/>
            <person name="Copeland A."/>
            <person name="Lucas S."/>
            <person name="Lapidus A."/>
            <person name="Barry K."/>
            <person name="Detter J.C."/>
            <person name="Glavina del Rio T."/>
            <person name="Hammon N."/>
            <person name="Israni S."/>
            <person name="Dalin E."/>
            <person name="Tice H."/>
            <person name="Pitluck S."/>
            <person name="Brettin T."/>
            <person name="Bruce D."/>
            <person name="Han C."/>
            <person name="Tapia R."/>
            <person name="Gilna P."/>
            <person name="Kiss H."/>
            <person name="Schmutz J."/>
            <person name="Larimer F."/>
            <person name="Land M."/>
            <person name="Hauser L."/>
            <person name="Kyrpides N."/>
            <person name="Lykidis A."/>
            <person name="Richardson P."/>
        </authorList>
    </citation>
    <scope>NUCLEOTIDE SEQUENCE [LARGE SCALE GENOMIC DNA]</scope>
    <source>
        <strain>OS217 / ATCC BAA-1090 / DSM 15013</strain>
    </source>
</reference>
<name>Y436_SHEDO</name>
<protein>
    <recommendedName>
        <fullName evidence="1">UPF0114 protein Sden_0436</fullName>
    </recommendedName>
</protein>
<keyword id="KW-1003">Cell membrane</keyword>
<keyword id="KW-0472">Membrane</keyword>
<keyword id="KW-1185">Reference proteome</keyword>
<keyword id="KW-0812">Transmembrane</keyword>
<keyword id="KW-1133">Transmembrane helix</keyword>
<sequence>MEKVFEKLMYASRWIMAPIYLGLSLILFALGIKFFQEIFHLIPNIFEIAEVDLVLITLSLIDITLVGGLLIMVMFSGYENFVSQLDVGESSEKLNWLGKMDAGSLKNKVAASIVAISSIHLLKVFMNAENIANDKIMWYLLIHITFVLSAFAMGYLDKITRK</sequence>
<gene>
    <name type="ordered locus">Sden_0436</name>
</gene>
<organism>
    <name type="scientific">Shewanella denitrificans (strain OS217 / ATCC BAA-1090 / DSM 15013)</name>
    <dbReference type="NCBI Taxonomy" id="318161"/>
    <lineage>
        <taxon>Bacteria</taxon>
        <taxon>Pseudomonadati</taxon>
        <taxon>Pseudomonadota</taxon>
        <taxon>Gammaproteobacteria</taxon>
        <taxon>Alteromonadales</taxon>
        <taxon>Shewanellaceae</taxon>
        <taxon>Shewanella</taxon>
    </lineage>
</organism>
<accession>Q12S48</accession>
<proteinExistence type="inferred from homology"/>
<evidence type="ECO:0000255" key="1">
    <source>
        <dbReference type="HAMAP-Rule" id="MF_00143"/>
    </source>
</evidence>
<dbReference type="EMBL" id="CP000302">
    <property type="protein sequence ID" value="ABE53728.1"/>
    <property type="molecule type" value="Genomic_DNA"/>
</dbReference>
<dbReference type="RefSeq" id="WP_011494894.1">
    <property type="nucleotide sequence ID" value="NC_007954.1"/>
</dbReference>
<dbReference type="STRING" id="318161.Sden_0436"/>
<dbReference type="KEGG" id="sdn:Sden_0436"/>
<dbReference type="eggNOG" id="COG2862">
    <property type="taxonomic scope" value="Bacteria"/>
</dbReference>
<dbReference type="HOGENOM" id="CLU_097887_1_1_6"/>
<dbReference type="OrthoDB" id="9783569at2"/>
<dbReference type="Proteomes" id="UP000001982">
    <property type="component" value="Chromosome"/>
</dbReference>
<dbReference type="GO" id="GO:0005886">
    <property type="term" value="C:plasma membrane"/>
    <property type="evidence" value="ECO:0007669"/>
    <property type="project" value="UniProtKB-SubCell"/>
</dbReference>
<dbReference type="HAMAP" id="MF_00143">
    <property type="entry name" value="UPF0114"/>
    <property type="match status" value="1"/>
</dbReference>
<dbReference type="InterPro" id="IPR005134">
    <property type="entry name" value="UPF0114"/>
</dbReference>
<dbReference type="InterPro" id="IPR020761">
    <property type="entry name" value="UPF0114_bac"/>
</dbReference>
<dbReference type="NCBIfam" id="TIGR00645">
    <property type="entry name" value="HI0507"/>
    <property type="match status" value="1"/>
</dbReference>
<dbReference type="PANTHER" id="PTHR38596">
    <property type="entry name" value="UPF0114 PROTEIN YQHA"/>
    <property type="match status" value="1"/>
</dbReference>
<dbReference type="PANTHER" id="PTHR38596:SF1">
    <property type="entry name" value="UPF0114 PROTEIN YQHA"/>
    <property type="match status" value="1"/>
</dbReference>
<dbReference type="Pfam" id="PF03350">
    <property type="entry name" value="UPF0114"/>
    <property type="match status" value="1"/>
</dbReference>